<gene>
    <name type="primary">ctaC</name>
    <name type="synonym">coxB</name>
    <name type="ordered locus">slr1136</name>
</gene>
<comment type="function">
    <text>Subunits I and II form the functional core of the enzyme complex. Electrons originating in cytochrome c are transferred via heme a and Cu(A) to the binuclear center formed by heme a3 and Cu(B).</text>
</comment>
<comment type="catalytic activity">
    <reaction>
        <text>4 Fe(II)-[cytochrome c] + O2 + 8 H(+)(in) = 4 Fe(III)-[cytochrome c] + 2 H2O + 4 H(+)(out)</text>
        <dbReference type="Rhea" id="RHEA:11436"/>
        <dbReference type="Rhea" id="RHEA-COMP:10350"/>
        <dbReference type="Rhea" id="RHEA-COMP:14399"/>
        <dbReference type="ChEBI" id="CHEBI:15377"/>
        <dbReference type="ChEBI" id="CHEBI:15378"/>
        <dbReference type="ChEBI" id="CHEBI:15379"/>
        <dbReference type="ChEBI" id="CHEBI:29033"/>
        <dbReference type="ChEBI" id="CHEBI:29034"/>
        <dbReference type="EC" id="7.1.1.9"/>
    </reaction>
</comment>
<comment type="cofactor">
    <cofactor>
        <name>Cu cation</name>
        <dbReference type="ChEBI" id="CHEBI:23378"/>
    </cofactor>
    <text>Binds a copper A center.</text>
</comment>
<comment type="subcellular location">
    <subcellularLocation>
        <location>Cell membrane</location>
        <topology>Multi-pass membrane protein</topology>
    </subcellularLocation>
</comment>
<comment type="similarity">
    <text evidence="2">Belongs to the cytochrome c oxidase subunit 2 family.</text>
</comment>
<accession>Q06474</accession>
<accession>P77963</accession>
<evidence type="ECO:0000255" key="1"/>
<evidence type="ECO:0000305" key="2"/>
<sequence>MKIPGSVITLLIGVVITVVSLWYGQNHGLMPVAASADAEKVDGIFNYMMTIATGLFLLVEGVLVYCLIRFRRRKDDQTDGPPIEGNVPLEILWTAIPTVIVFTLAVYSFEVYNNLGGLDPTISRDNAGQQMAHNHMGHMGSMGNMVAMAGDGDVALGIGLDSEEQGVNPLMVDVKGIQYAWIFTYPETGIISGELHAPIDRPVQLNMEAGDVIHAFWIPQLRLKQDVIPGRGSTLVFNASTPGQYPVICAELCGAYHGGMKSVFYAHTPEEYDDWVAANAPAPTESMAMTLPKATTAMTPNEYLAPYAKEMGVQTEALAQLKDQTSPVGDLL</sequence>
<keyword id="KW-1003">Cell membrane</keyword>
<keyword id="KW-0186">Copper</keyword>
<keyword id="KW-0249">Electron transport</keyword>
<keyword id="KW-0472">Membrane</keyword>
<keyword id="KW-0479">Metal-binding</keyword>
<keyword id="KW-1185">Reference proteome</keyword>
<keyword id="KW-0679">Respiratory chain</keyword>
<keyword id="KW-0732">Signal</keyword>
<keyword id="KW-1278">Translocase</keyword>
<keyword id="KW-0812">Transmembrane</keyword>
<keyword id="KW-1133">Transmembrane helix</keyword>
<keyword id="KW-0813">Transport</keyword>
<protein>
    <recommendedName>
        <fullName>Cytochrome c oxidase subunit 2</fullName>
        <ecNumber>7.1.1.9</ecNumber>
    </recommendedName>
    <alternativeName>
        <fullName>Cytochrome aa3 subunit 2</fullName>
    </alternativeName>
    <alternativeName>
        <fullName>Cytochrome c oxidase polypeptide II</fullName>
    </alternativeName>
    <alternativeName>
        <fullName>Oxidase aa(3) subunit 2</fullName>
    </alternativeName>
</protein>
<name>COX2_SYNY3</name>
<dbReference type="EC" id="7.1.1.9"/>
<dbReference type="EMBL" id="X53746">
    <property type="protein sequence ID" value="CAA37776.1"/>
    <property type="molecule type" value="Genomic_DNA"/>
</dbReference>
<dbReference type="EMBL" id="BA000022">
    <property type="protein sequence ID" value="BAA17288.1"/>
    <property type="molecule type" value="Genomic_DNA"/>
</dbReference>
<dbReference type="PIR" id="S77441">
    <property type="entry name" value="S77441"/>
</dbReference>
<dbReference type="SMR" id="Q06474"/>
<dbReference type="FunCoup" id="Q06474">
    <property type="interactions" value="108"/>
</dbReference>
<dbReference type="IntAct" id="Q06474">
    <property type="interactions" value="2"/>
</dbReference>
<dbReference type="STRING" id="1148.gene:10498151"/>
<dbReference type="PaxDb" id="1148-1652366"/>
<dbReference type="EnsemblBacteria" id="BAA17288">
    <property type="protein sequence ID" value="BAA17288"/>
    <property type="gene ID" value="BAA17288"/>
</dbReference>
<dbReference type="KEGG" id="syn:slr1136"/>
<dbReference type="eggNOG" id="COG1622">
    <property type="taxonomic scope" value="Bacteria"/>
</dbReference>
<dbReference type="InParanoid" id="Q06474"/>
<dbReference type="PhylomeDB" id="Q06474"/>
<dbReference type="Proteomes" id="UP000001425">
    <property type="component" value="Chromosome"/>
</dbReference>
<dbReference type="GO" id="GO:0005886">
    <property type="term" value="C:plasma membrane"/>
    <property type="evidence" value="ECO:0007669"/>
    <property type="project" value="UniProtKB-SubCell"/>
</dbReference>
<dbReference type="GO" id="GO:0005507">
    <property type="term" value="F:copper ion binding"/>
    <property type="evidence" value="ECO:0007669"/>
    <property type="project" value="InterPro"/>
</dbReference>
<dbReference type="GO" id="GO:0004129">
    <property type="term" value="F:cytochrome-c oxidase activity"/>
    <property type="evidence" value="ECO:0007669"/>
    <property type="project" value="UniProtKB-EC"/>
</dbReference>
<dbReference type="GO" id="GO:0042773">
    <property type="term" value="P:ATP synthesis coupled electron transport"/>
    <property type="evidence" value="ECO:0000318"/>
    <property type="project" value="GO_Central"/>
</dbReference>
<dbReference type="CDD" id="cd13919">
    <property type="entry name" value="CuRO_HCO_II_like_5"/>
    <property type="match status" value="1"/>
</dbReference>
<dbReference type="FunFam" id="1.10.287.90:FF:000013">
    <property type="entry name" value="Cytochrome c oxidase subunit 2"/>
    <property type="match status" value="1"/>
</dbReference>
<dbReference type="FunFam" id="2.60.40.420:FF:000123">
    <property type="entry name" value="Cytochrome c oxidase subunit 2"/>
    <property type="match status" value="1"/>
</dbReference>
<dbReference type="Gene3D" id="1.10.287.90">
    <property type="match status" value="1"/>
</dbReference>
<dbReference type="Gene3D" id="2.60.40.420">
    <property type="entry name" value="Cupredoxins - blue copper proteins"/>
    <property type="match status" value="1"/>
</dbReference>
<dbReference type="InterPro" id="IPR045187">
    <property type="entry name" value="CcO_II"/>
</dbReference>
<dbReference type="InterPro" id="IPR002429">
    <property type="entry name" value="CcO_II-like_C"/>
</dbReference>
<dbReference type="InterPro" id="IPR001505">
    <property type="entry name" value="Copper_CuA"/>
</dbReference>
<dbReference type="InterPro" id="IPR008972">
    <property type="entry name" value="Cupredoxin"/>
</dbReference>
<dbReference type="InterPro" id="IPR011759">
    <property type="entry name" value="Cyt_c_oxidase_su2_TM_dom"/>
</dbReference>
<dbReference type="InterPro" id="IPR036257">
    <property type="entry name" value="Cyt_c_oxidase_su2_TM_sf"/>
</dbReference>
<dbReference type="PANTHER" id="PTHR22888:SF9">
    <property type="entry name" value="CYTOCHROME C OXIDASE SUBUNIT 2"/>
    <property type="match status" value="1"/>
</dbReference>
<dbReference type="PANTHER" id="PTHR22888">
    <property type="entry name" value="CYTOCHROME C OXIDASE, SUBUNIT II"/>
    <property type="match status" value="1"/>
</dbReference>
<dbReference type="Pfam" id="PF00116">
    <property type="entry name" value="COX2"/>
    <property type="match status" value="1"/>
</dbReference>
<dbReference type="Pfam" id="PF02790">
    <property type="entry name" value="COX2_TM"/>
    <property type="match status" value="1"/>
</dbReference>
<dbReference type="PRINTS" id="PR01166">
    <property type="entry name" value="CYCOXIDASEII"/>
</dbReference>
<dbReference type="SUPFAM" id="SSF49503">
    <property type="entry name" value="Cupredoxins"/>
    <property type="match status" value="1"/>
</dbReference>
<dbReference type="SUPFAM" id="SSF81464">
    <property type="entry name" value="Cytochrome c oxidase subunit II-like, transmembrane region"/>
    <property type="match status" value="1"/>
</dbReference>
<dbReference type="PROSITE" id="PS00078">
    <property type="entry name" value="COX2"/>
    <property type="match status" value="1"/>
</dbReference>
<dbReference type="PROSITE" id="PS50857">
    <property type="entry name" value="COX2_CUA"/>
    <property type="match status" value="1"/>
</dbReference>
<dbReference type="PROSITE" id="PS50999">
    <property type="entry name" value="COX2_TM"/>
    <property type="match status" value="1"/>
</dbReference>
<organism>
    <name type="scientific">Synechocystis sp. (strain ATCC 27184 / PCC 6803 / Kazusa)</name>
    <dbReference type="NCBI Taxonomy" id="1111708"/>
    <lineage>
        <taxon>Bacteria</taxon>
        <taxon>Bacillati</taxon>
        <taxon>Cyanobacteriota</taxon>
        <taxon>Cyanophyceae</taxon>
        <taxon>Synechococcales</taxon>
        <taxon>Merismopediaceae</taxon>
        <taxon>Synechocystis</taxon>
    </lineage>
</organism>
<reference key="1">
    <citation type="journal article" date="1993" name="Biochem. Biophys. Res. Commun.">
        <title>Identification and characterization of the ctaC (coxB) gene as part of an operon encoding subunits I, II, and III of the cytochrome c oxidase (cytochrome aa3) in the cyanobacterium Synechocystis PCC 6803.</title>
        <authorList>
            <person name="Alge D."/>
            <person name="Peschek G.A."/>
        </authorList>
    </citation>
    <scope>NUCLEOTIDE SEQUENCE [GENOMIC DNA]</scope>
</reference>
<reference key="2">
    <citation type="journal article" date="1993" name="Biochem. Mol. Biol. Int.">
        <title>Characterization of a cta/CDE operon-like genomic region encoding subunits I-III of the cytochrome c oxidase of the cyanobacterium Synechocystis PCC 6803.</title>
        <authorList>
            <person name="Alge D."/>
            <person name="Peschek G.A."/>
        </authorList>
    </citation>
    <scope>NUCLEOTIDE SEQUENCE [GENOMIC DNA]</scope>
</reference>
<reference key="3">
    <citation type="journal article" date="1996" name="DNA Res.">
        <title>Sequence analysis of the genome of the unicellular cyanobacterium Synechocystis sp. strain PCC6803. II. Sequence determination of the entire genome and assignment of potential protein-coding regions.</title>
        <authorList>
            <person name="Kaneko T."/>
            <person name="Sato S."/>
            <person name="Kotani H."/>
            <person name="Tanaka A."/>
            <person name="Asamizu E."/>
            <person name="Nakamura Y."/>
            <person name="Miyajima N."/>
            <person name="Hirosawa M."/>
            <person name="Sugiura M."/>
            <person name="Sasamoto S."/>
            <person name="Kimura T."/>
            <person name="Hosouchi T."/>
            <person name="Matsuno A."/>
            <person name="Muraki A."/>
            <person name="Nakazaki N."/>
            <person name="Naruo K."/>
            <person name="Okumura S."/>
            <person name="Shimpo S."/>
            <person name="Takeuchi C."/>
            <person name="Wada T."/>
            <person name="Watanabe A."/>
            <person name="Yamada M."/>
            <person name="Yasuda M."/>
            <person name="Tabata S."/>
        </authorList>
    </citation>
    <scope>NUCLEOTIDE SEQUENCE [LARGE SCALE GENOMIC DNA]</scope>
    <source>
        <strain>ATCC 27184 / PCC 6803 / Kazusa</strain>
    </source>
</reference>
<proteinExistence type="inferred from homology"/>
<feature type="signal peptide" evidence="1">
    <location>
        <begin position="1"/>
        <end position="20"/>
    </location>
</feature>
<feature type="chain" id="PRO_0000006065" description="Cytochrome c oxidase subunit 2">
    <location>
        <begin position="21"/>
        <end position="332"/>
    </location>
</feature>
<feature type="transmembrane region" description="Helical" evidence="1">
    <location>
        <begin position="48"/>
        <end position="68"/>
    </location>
</feature>
<feature type="transmembrane region" description="Helical" evidence="1">
    <location>
        <begin position="87"/>
        <end position="107"/>
    </location>
</feature>
<feature type="binding site" evidence="2">
    <location>
        <position position="214"/>
    </location>
    <ligand>
        <name>Cu cation</name>
        <dbReference type="ChEBI" id="CHEBI:23378"/>
        <label>A</label>
    </ligand>
</feature>
<feature type="binding site" evidence="2">
    <location>
        <position position="249"/>
    </location>
    <ligand>
        <name>Cu cation</name>
        <dbReference type="ChEBI" id="CHEBI:23378"/>
        <label>A</label>
    </ligand>
</feature>
<feature type="binding site" evidence="2">
    <location>
        <position position="253"/>
    </location>
    <ligand>
        <name>Cu cation</name>
        <dbReference type="ChEBI" id="CHEBI:23378"/>
        <label>A</label>
    </ligand>
</feature>
<feature type="binding site" evidence="2">
    <location>
        <position position="257"/>
    </location>
    <ligand>
        <name>Cu cation</name>
        <dbReference type="ChEBI" id="CHEBI:23378"/>
        <label>A</label>
    </ligand>
</feature>
<feature type="sequence conflict" description="In Ref. 1 and 2." evidence="2" ref="1 2">
    <original>STPGQ</original>
    <variation>RHPWA</variation>
    <location>
        <begin position="240"/>
        <end position="244"/>
    </location>
</feature>
<feature type="sequence conflict" description="In Ref. 1 and 2." evidence="2" ref="1 2">
    <original>QLKDQTSPVGDLL</original>
    <variation>N</variation>
    <location>
        <begin position="320"/>
        <end position="332"/>
    </location>
</feature>